<name>NV7_NEMVE</name>
<keyword id="KW-1015">Disulfide bond</keyword>
<keyword id="KW-0732">Signal</keyword>
<keyword id="KW-0800">Toxin</keyword>
<sequence>MASFFKIAVICLVMLVVCSNARVIDVDDDYLMDFAASKRGGQTCYCRGGSGPTGGFWGGQNCPAGMTSCRKNILGNCCQKSKEGTDCDI</sequence>
<proteinExistence type="evidence at protein level"/>
<accession>P0DQR3</accession>
<protein>
    <recommendedName>
        <fullName evidence="5">N.vectensis toxin 7</fullName>
        <shortName evidence="4">Nv7</shortName>
    </recommendedName>
</protein>
<feature type="signal peptide" evidence="2">
    <location>
        <begin position="1"/>
        <end position="21"/>
    </location>
</feature>
<feature type="chain" id="PRO_0000453818" description="N.vectensis toxin 7" evidence="5">
    <location>
        <begin position="22"/>
        <end position="89"/>
    </location>
</feature>
<feature type="disulfide bond" evidence="1">
    <location>
        <begin position="44"/>
        <end position="77"/>
    </location>
</feature>
<feature type="disulfide bond" evidence="1">
    <location>
        <begin position="46"/>
        <end position="69"/>
    </location>
</feature>
<feature type="disulfide bond" evidence="1">
    <location>
        <begin position="62"/>
        <end position="78"/>
    </location>
</feature>
<organism>
    <name type="scientific">Nematostella vectensis</name>
    <name type="common">Starlet sea anemone</name>
    <dbReference type="NCBI Taxonomy" id="45351"/>
    <lineage>
        <taxon>Eukaryota</taxon>
        <taxon>Metazoa</taxon>
        <taxon>Cnidaria</taxon>
        <taxon>Anthozoa</taxon>
        <taxon>Hexacorallia</taxon>
        <taxon>Actiniaria</taxon>
        <taxon>Edwardsiidae</taxon>
        <taxon>Nematostella</taxon>
    </lineage>
</organism>
<dbReference type="GO" id="GO:0090729">
    <property type="term" value="F:toxin activity"/>
    <property type="evidence" value="ECO:0007669"/>
    <property type="project" value="UniProtKB-KW"/>
</dbReference>
<comment type="function">
    <text evidence="5">Probable toxin.</text>
</comment>
<comment type="tissue specificity">
    <text evidence="6">Expressed in ectodermal gland cells.</text>
</comment>
<comment type="developmental stage">
    <text evidence="3">Is detected in unfertilized eggs, late planulae, primary polyps and adult females (but not males) (at protein level).</text>
</comment>
<comment type="online information" name="National Center for Biotechnology Information (NCBI)">
    <link uri="https://www.ncbi.nlm.nih.gov/nucleotide/XR_004295599.1?report=genbank&amp;log$=nucltop&amp;blast_rank=1&amp;RID=CTDFKA6D013"/>
</comment>
<reference key="1">
    <citation type="journal article" date="2019" name="Mol. Biol. Evol.">
        <title>The birth and death of toxins with distinct functions: a case study in the sea anemone Nematostella.</title>
        <authorList>
            <person name="Sachkova M.Y."/>
            <person name="Singer S.A."/>
            <person name="Macrander J."/>
            <person name="Reitzel A.M."/>
            <person name="Peigneur S."/>
            <person name="Tytgat J."/>
            <person name="Moran Y."/>
        </authorList>
    </citation>
    <scope>NUCLEOTIDE SEQUENCE [MRNA]</scope>
    <scope>IDENTIFICATION BY MASS SPECTROMETRY</scope>
    <scope>TISSUE SPECIFICITY</scope>
    <scope>DEVELOPMENTAL STAGE</scope>
</reference>
<evidence type="ECO:0000250" key="1">
    <source>
        <dbReference type="UniProtKB" id="P19651"/>
    </source>
</evidence>
<evidence type="ECO:0000255" key="2"/>
<evidence type="ECO:0000269" key="3">
    <source>
    </source>
</evidence>
<evidence type="ECO:0000303" key="4">
    <source>
    </source>
</evidence>
<evidence type="ECO:0000305" key="5"/>
<evidence type="ECO:0000305" key="6">
    <source>
    </source>
</evidence>